<protein>
    <recommendedName>
        <fullName>Endoplasmic reticulum-Golgi intermediate compartment protein 1</fullName>
    </recommendedName>
    <alternativeName>
        <fullName>ER-Golgi intermediate compartment 32 kDa protein</fullName>
        <shortName>ERGIC-32</shortName>
    </alternativeName>
</protein>
<name>ERGI1_XENLA</name>
<proteinExistence type="evidence at transcript level"/>
<gene>
    <name type="primary">ergic1</name>
    <name type="synonym">ergic32</name>
</gene>
<evidence type="ECO:0000250" key="1"/>
<evidence type="ECO:0000255" key="2"/>
<evidence type="ECO:0000305" key="3"/>
<comment type="function">
    <text evidence="1">Possible role in transport between endoplasmic reticulum and Golgi.</text>
</comment>
<comment type="subcellular location">
    <subcellularLocation>
        <location evidence="1">Endoplasmic reticulum membrane</location>
        <topology evidence="1">Multi-pass membrane protein</topology>
    </subcellularLocation>
    <subcellularLocation>
        <location evidence="1">Endoplasmic reticulum-Golgi intermediate compartment membrane</location>
        <topology evidence="1">Multi-pass membrane protein</topology>
    </subcellularLocation>
    <subcellularLocation>
        <location evidence="1">Golgi apparatus membrane</location>
        <topology evidence="1">Multi-pass membrane protein</topology>
    </subcellularLocation>
</comment>
<comment type="similarity">
    <text evidence="3">Belongs to the ERGIC family.</text>
</comment>
<accession>Q6NS19</accession>
<dbReference type="EMBL" id="BC070532">
    <property type="protein sequence ID" value="AAH70532.1"/>
    <property type="molecule type" value="mRNA"/>
</dbReference>
<dbReference type="RefSeq" id="NP_001084786.1">
    <property type="nucleotide sequence ID" value="NM_001091317.1"/>
</dbReference>
<dbReference type="SMR" id="Q6NS19"/>
<dbReference type="GlyCosmos" id="Q6NS19">
    <property type="glycosylation" value="1 site, No reported glycans"/>
</dbReference>
<dbReference type="DNASU" id="431823"/>
<dbReference type="GeneID" id="431823"/>
<dbReference type="KEGG" id="xla:431823"/>
<dbReference type="AGR" id="Xenbase:XB-GENE-947916"/>
<dbReference type="CTD" id="431823"/>
<dbReference type="Xenbase" id="XB-GENE-947916">
    <property type="gene designation" value="ergic1.S"/>
</dbReference>
<dbReference type="OMA" id="IIPAVWF"/>
<dbReference type="OrthoDB" id="270930at2759"/>
<dbReference type="Proteomes" id="UP000186698">
    <property type="component" value="Chromosome 3S"/>
</dbReference>
<dbReference type="Bgee" id="431823">
    <property type="expression patterns" value="Expressed in egg cell and 18 other cell types or tissues"/>
</dbReference>
<dbReference type="GO" id="GO:0030134">
    <property type="term" value="C:COPII-coated ER to Golgi transport vesicle"/>
    <property type="evidence" value="ECO:0000318"/>
    <property type="project" value="GO_Central"/>
</dbReference>
<dbReference type="GO" id="GO:0005783">
    <property type="term" value="C:endoplasmic reticulum"/>
    <property type="evidence" value="ECO:0000318"/>
    <property type="project" value="GO_Central"/>
</dbReference>
<dbReference type="GO" id="GO:0005789">
    <property type="term" value="C:endoplasmic reticulum membrane"/>
    <property type="evidence" value="ECO:0000318"/>
    <property type="project" value="GO_Central"/>
</dbReference>
<dbReference type="GO" id="GO:0033116">
    <property type="term" value="C:endoplasmic reticulum-Golgi intermediate compartment membrane"/>
    <property type="evidence" value="ECO:0007669"/>
    <property type="project" value="UniProtKB-SubCell"/>
</dbReference>
<dbReference type="GO" id="GO:0000139">
    <property type="term" value="C:Golgi membrane"/>
    <property type="evidence" value="ECO:0000318"/>
    <property type="project" value="GO_Central"/>
</dbReference>
<dbReference type="GO" id="GO:0006888">
    <property type="term" value="P:endoplasmic reticulum to Golgi vesicle-mediated transport"/>
    <property type="evidence" value="ECO:0000318"/>
    <property type="project" value="GO_Central"/>
</dbReference>
<dbReference type="GO" id="GO:0006890">
    <property type="term" value="P:retrograde vesicle-mediated transport, Golgi to endoplasmic reticulum"/>
    <property type="evidence" value="ECO:0000318"/>
    <property type="project" value="GO_Central"/>
</dbReference>
<dbReference type="InterPro" id="IPR045888">
    <property type="entry name" value="Erv"/>
</dbReference>
<dbReference type="InterPro" id="IPR012936">
    <property type="entry name" value="Erv_C"/>
</dbReference>
<dbReference type="InterPro" id="IPR039542">
    <property type="entry name" value="Erv_N"/>
</dbReference>
<dbReference type="PANTHER" id="PTHR10984">
    <property type="entry name" value="ENDOPLASMIC RETICULUM-GOLGI INTERMEDIATE COMPARTMENT PROTEIN"/>
    <property type="match status" value="1"/>
</dbReference>
<dbReference type="PANTHER" id="PTHR10984:SF36">
    <property type="entry name" value="ENDOPLASMIC RETICULUM-GOLGI INTERMEDIATE COMPARTMENT PROTEIN 1"/>
    <property type="match status" value="1"/>
</dbReference>
<dbReference type="Pfam" id="PF07970">
    <property type="entry name" value="COPIIcoated_ERV"/>
    <property type="match status" value="1"/>
</dbReference>
<dbReference type="Pfam" id="PF13850">
    <property type="entry name" value="ERGIC_N"/>
    <property type="match status" value="1"/>
</dbReference>
<organism>
    <name type="scientific">Xenopus laevis</name>
    <name type="common">African clawed frog</name>
    <dbReference type="NCBI Taxonomy" id="8355"/>
    <lineage>
        <taxon>Eukaryota</taxon>
        <taxon>Metazoa</taxon>
        <taxon>Chordata</taxon>
        <taxon>Craniata</taxon>
        <taxon>Vertebrata</taxon>
        <taxon>Euteleostomi</taxon>
        <taxon>Amphibia</taxon>
        <taxon>Batrachia</taxon>
        <taxon>Anura</taxon>
        <taxon>Pipoidea</taxon>
        <taxon>Pipidae</taxon>
        <taxon>Xenopodinae</taxon>
        <taxon>Xenopus</taxon>
        <taxon>Xenopus</taxon>
    </lineage>
</organism>
<keyword id="KW-0256">Endoplasmic reticulum</keyword>
<keyword id="KW-0931">ER-Golgi transport</keyword>
<keyword id="KW-0325">Glycoprotein</keyword>
<keyword id="KW-0333">Golgi apparatus</keyword>
<keyword id="KW-0472">Membrane</keyword>
<keyword id="KW-1185">Reference proteome</keyword>
<keyword id="KW-0812">Transmembrane</keyword>
<keyword id="KW-1133">Transmembrane helix</keyword>
<keyword id="KW-0813">Transport</keyword>
<sequence>MPFDFRRFDIYRKVPKDLTQPTYTGAIISICCCLFITFLFLSELTGFIANEIVNELYVDDPDKDSGGKIDVTLNVTLPNLPCEVVGLDIQDEMGRHEVGHIDNSMKIPINNAYGCRFEGLFSINKVPGNFHVSTHSAIAQPANPDMRHIIHKLSFGNTLQVDNIHGAFNALGGADKLASKALESHDYVLKIVPTVYEDLNGKQQFSYQYTVANKAYVAYSHTGRVVPAIWFRYDLSPITVKYTERRQPMYRFITTVCAIIGGTFTVAGILDSFIFTASEAWKKIQLGKMQ</sequence>
<reference key="1">
    <citation type="submission" date="2004-05" db="EMBL/GenBank/DDBJ databases">
        <authorList>
            <consortium name="NIH - Xenopus Gene Collection (XGC) project"/>
        </authorList>
    </citation>
    <scope>NUCLEOTIDE SEQUENCE [LARGE SCALE MRNA]</scope>
    <source>
        <tissue>Embryo</tissue>
    </source>
</reference>
<feature type="chain" id="PRO_0000087025" description="Endoplasmic reticulum-Golgi intermediate compartment protein 1">
    <location>
        <begin position="1"/>
        <end position="290"/>
    </location>
</feature>
<feature type="topological domain" description="Cytoplasmic" evidence="2">
    <location>
        <begin position="1"/>
        <end position="26"/>
    </location>
</feature>
<feature type="transmembrane region" description="Helical" evidence="2">
    <location>
        <begin position="27"/>
        <end position="47"/>
    </location>
</feature>
<feature type="topological domain" description="Lumenal" evidence="2">
    <location>
        <begin position="48"/>
        <end position="254"/>
    </location>
</feature>
<feature type="transmembrane region" description="Helical" evidence="2">
    <location>
        <begin position="255"/>
        <end position="275"/>
    </location>
</feature>
<feature type="topological domain" description="Cytoplasmic" evidence="2">
    <location>
        <begin position="276"/>
        <end position="290"/>
    </location>
</feature>
<feature type="glycosylation site" description="N-linked (GlcNAc...) asparagine" evidence="1">
    <location>
        <position position="74"/>
    </location>
</feature>